<accession>Q5KZU9</accession>
<dbReference type="EC" id="3.5.2.9" evidence="1"/>
<dbReference type="EMBL" id="BA000043">
    <property type="protein sequence ID" value="BAD75787.1"/>
    <property type="molecule type" value="Genomic_DNA"/>
</dbReference>
<dbReference type="RefSeq" id="WP_011230998.1">
    <property type="nucleotide sequence ID" value="NC_006510.1"/>
</dbReference>
<dbReference type="SMR" id="Q5KZU9"/>
<dbReference type="STRING" id="235909.GK1502"/>
<dbReference type="KEGG" id="gka:GK1502"/>
<dbReference type="eggNOG" id="COG1540">
    <property type="taxonomic scope" value="Bacteria"/>
</dbReference>
<dbReference type="HOGENOM" id="CLU_069535_0_0_9"/>
<dbReference type="Proteomes" id="UP000001172">
    <property type="component" value="Chromosome"/>
</dbReference>
<dbReference type="GO" id="GO:0017168">
    <property type="term" value="F:5-oxoprolinase (ATP-hydrolyzing) activity"/>
    <property type="evidence" value="ECO:0007669"/>
    <property type="project" value="UniProtKB-UniRule"/>
</dbReference>
<dbReference type="GO" id="GO:0005524">
    <property type="term" value="F:ATP binding"/>
    <property type="evidence" value="ECO:0007669"/>
    <property type="project" value="UniProtKB-UniRule"/>
</dbReference>
<dbReference type="GO" id="GO:0005975">
    <property type="term" value="P:carbohydrate metabolic process"/>
    <property type="evidence" value="ECO:0007669"/>
    <property type="project" value="InterPro"/>
</dbReference>
<dbReference type="CDD" id="cd10787">
    <property type="entry name" value="LamB_YcsF_like"/>
    <property type="match status" value="1"/>
</dbReference>
<dbReference type="Gene3D" id="3.20.20.370">
    <property type="entry name" value="Glycoside hydrolase/deacetylase"/>
    <property type="match status" value="1"/>
</dbReference>
<dbReference type="HAMAP" id="MF_00691">
    <property type="entry name" value="PxpA"/>
    <property type="match status" value="1"/>
</dbReference>
<dbReference type="InterPro" id="IPR011330">
    <property type="entry name" value="Glyco_hydro/deAcase_b/a-brl"/>
</dbReference>
<dbReference type="InterPro" id="IPR005501">
    <property type="entry name" value="LamB/YcsF/PxpA-like"/>
</dbReference>
<dbReference type="NCBIfam" id="NF003814">
    <property type="entry name" value="PRK05406.1-3"/>
    <property type="match status" value="1"/>
</dbReference>
<dbReference type="NCBIfam" id="NF003816">
    <property type="entry name" value="PRK05406.1-5"/>
    <property type="match status" value="1"/>
</dbReference>
<dbReference type="PANTHER" id="PTHR30292:SF0">
    <property type="entry name" value="5-OXOPROLINASE SUBUNIT A"/>
    <property type="match status" value="1"/>
</dbReference>
<dbReference type="PANTHER" id="PTHR30292">
    <property type="entry name" value="UNCHARACTERIZED PROTEIN YBGL-RELATED"/>
    <property type="match status" value="1"/>
</dbReference>
<dbReference type="Pfam" id="PF03746">
    <property type="entry name" value="LamB_YcsF"/>
    <property type="match status" value="1"/>
</dbReference>
<dbReference type="SUPFAM" id="SSF88713">
    <property type="entry name" value="Glycoside hydrolase/deacetylase"/>
    <property type="match status" value="1"/>
</dbReference>
<comment type="function">
    <text evidence="1">Catalyzes the cleavage of 5-oxoproline to form L-glutamate coupled to the hydrolysis of ATP to ADP and inorganic phosphate.</text>
</comment>
<comment type="catalytic activity">
    <reaction evidence="1">
        <text>5-oxo-L-proline + ATP + 2 H2O = L-glutamate + ADP + phosphate + H(+)</text>
        <dbReference type="Rhea" id="RHEA:10348"/>
        <dbReference type="ChEBI" id="CHEBI:15377"/>
        <dbReference type="ChEBI" id="CHEBI:15378"/>
        <dbReference type="ChEBI" id="CHEBI:29985"/>
        <dbReference type="ChEBI" id="CHEBI:30616"/>
        <dbReference type="ChEBI" id="CHEBI:43474"/>
        <dbReference type="ChEBI" id="CHEBI:58402"/>
        <dbReference type="ChEBI" id="CHEBI:456216"/>
        <dbReference type="EC" id="3.5.2.9"/>
    </reaction>
</comment>
<comment type="subunit">
    <text evidence="1">Forms a complex composed of PxpA, PxpB and PxpC.</text>
</comment>
<comment type="similarity">
    <text evidence="1">Belongs to the LamB/PxpA family.</text>
</comment>
<evidence type="ECO:0000255" key="1">
    <source>
        <dbReference type="HAMAP-Rule" id="MF_00691"/>
    </source>
</evidence>
<gene>
    <name evidence="1" type="primary">pxpA</name>
    <name type="ordered locus">GK1502</name>
</gene>
<organism>
    <name type="scientific">Geobacillus kaustophilus (strain HTA426)</name>
    <dbReference type="NCBI Taxonomy" id="235909"/>
    <lineage>
        <taxon>Bacteria</taxon>
        <taxon>Bacillati</taxon>
        <taxon>Bacillota</taxon>
        <taxon>Bacilli</taxon>
        <taxon>Bacillales</taxon>
        <taxon>Anoxybacillaceae</taxon>
        <taxon>Geobacillus</taxon>
        <taxon>Geobacillus thermoleovorans group</taxon>
    </lineage>
</organism>
<proteinExistence type="inferred from homology"/>
<name>PXPA_GEOKA</name>
<sequence>MRTIDLNCDFGESFGVYRLGQEEILSYVTSVNIACGFHAGDPLVMRRTVQLAIQHGVAIGAHPGFPDLFGFGRRAMAVSPEEVYAYVVYQIGALAAFVKAEGGVMTHVKPHGALYNMAAKDAALAEAIAKAVHDVDPMLVLYGLSGSELIRAGRACGLRTASEVFADRTYQADGSLTPRSDPRAIIADEDEAVTQVLMMIRDRRVRSVQGTDVAIEADTVCLHGDNEQAVRFAKRLYQALQNEGIAIQAPRREERR</sequence>
<keyword id="KW-0067">ATP-binding</keyword>
<keyword id="KW-0378">Hydrolase</keyword>
<keyword id="KW-0547">Nucleotide-binding</keyword>
<keyword id="KW-1185">Reference proteome</keyword>
<feature type="chain" id="PRO_0000185012" description="5-oxoprolinase subunit A">
    <location>
        <begin position="1"/>
        <end position="256"/>
    </location>
</feature>
<reference key="1">
    <citation type="journal article" date="2004" name="Nucleic Acids Res.">
        <title>Thermoadaptation trait revealed by the genome sequence of thermophilic Geobacillus kaustophilus.</title>
        <authorList>
            <person name="Takami H."/>
            <person name="Takaki Y."/>
            <person name="Chee G.-J."/>
            <person name="Nishi S."/>
            <person name="Shimamura S."/>
            <person name="Suzuki H."/>
            <person name="Matsui S."/>
            <person name="Uchiyama I."/>
        </authorList>
    </citation>
    <scope>NUCLEOTIDE SEQUENCE [LARGE SCALE GENOMIC DNA]</scope>
    <source>
        <strain>HTA426</strain>
    </source>
</reference>
<protein>
    <recommendedName>
        <fullName evidence="1">5-oxoprolinase subunit A</fullName>
        <shortName evidence="1">5-OPase subunit A</shortName>
        <ecNumber evidence="1">3.5.2.9</ecNumber>
    </recommendedName>
    <alternativeName>
        <fullName evidence="1">5-oxoprolinase (ATP-hydrolyzing) subunit A</fullName>
    </alternativeName>
</protein>